<proteinExistence type="inferred from homology"/>
<keyword id="KW-0014">AIDS</keyword>
<keyword id="KW-0053">Apoptosis</keyword>
<keyword id="KW-1043">Host membrane</keyword>
<keyword id="KW-0945">Host-virus interaction</keyword>
<keyword id="KW-1090">Inhibition of host innate immune response by virus</keyword>
<keyword id="KW-1084">Inhibition of host tetherin by virus</keyword>
<keyword id="KW-0407">Ion channel</keyword>
<keyword id="KW-0406">Ion transport</keyword>
<keyword id="KW-0472">Membrane</keyword>
<keyword id="KW-0597">Phosphoprotein</keyword>
<keyword id="KW-1185">Reference proteome</keyword>
<keyword id="KW-0812">Transmembrane</keyword>
<keyword id="KW-1133">Transmembrane helix</keyword>
<keyword id="KW-0813">Transport</keyword>
<keyword id="KW-0899">Viral immunoevasion</keyword>
<dbReference type="EMBL" id="AF005496">
    <property type="protein sequence ID" value="AAD03189.1"/>
    <property type="molecule type" value="Genomic_DNA"/>
</dbReference>
<dbReference type="Proteomes" id="UP000007685">
    <property type="component" value="Segment"/>
</dbReference>
<dbReference type="GO" id="GO:0033644">
    <property type="term" value="C:host cell membrane"/>
    <property type="evidence" value="ECO:0007669"/>
    <property type="project" value="UniProtKB-SubCell"/>
</dbReference>
<dbReference type="GO" id="GO:0016020">
    <property type="term" value="C:membrane"/>
    <property type="evidence" value="ECO:0007669"/>
    <property type="project" value="UniProtKB-UniRule"/>
</dbReference>
<dbReference type="GO" id="GO:0042609">
    <property type="term" value="F:CD4 receptor binding"/>
    <property type="evidence" value="ECO:0007669"/>
    <property type="project" value="UniProtKB-UniRule"/>
</dbReference>
<dbReference type="GO" id="GO:0005261">
    <property type="term" value="F:monoatomic cation channel activity"/>
    <property type="evidence" value="ECO:0007669"/>
    <property type="project" value="UniProtKB-UniRule"/>
</dbReference>
<dbReference type="GO" id="GO:0032801">
    <property type="term" value="P:receptor catabolic process"/>
    <property type="evidence" value="ECO:0007669"/>
    <property type="project" value="UniProtKB-UniRule"/>
</dbReference>
<dbReference type="GO" id="GO:0052170">
    <property type="term" value="P:symbiont-mediated suppression of host innate immune response"/>
    <property type="evidence" value="ECO:0007669"/>
    <property type="project" value="UniProtKB-KW"/>
</dbReference>
<dbReference type="GO" id="GO:0039502">
    <property type="term" value="P:symbiont-mediated suppression of host type I interferon-mediated signaling pathway"/>
    <property type="evidence" value="ECO:0007669"/>
    <property type="project" value="UniProtKB-UniRule"/>
</dbReference>
<dbReference type="GO" id="GO:0039587">
    <property type="term" value="P:symbiont-mediated-mediated suppression of host tetherin activity"/>
    <property type="evidence" value="ECO:0007669"/>
    <property type="project" value="UniProtKB-UniRule"/>
</dbReference>
<dbReference type="GO" id="GO:0019076">
    <property type="term" value="P:viral release from host cell"/>
    <property type="evidence" value="ECO:0007669"/>
    <property type="project" value="UniProtKB-UniRule"/>
</dbReference>
<dbReference type="Gene3D" id="1.10.195.10">
    <property type="entry name" value="HIV-1 VPU cytoplasmic domain"/>
    <property type="match status" value="1"/>
</dbReference>
<dbReference type="HAMAP" id="MF_04082">
    <property type="entry name" value="HIV_VPU"/>
    <property type="match status" value="1"/>
</dbReference>
<dbReference type="InterPro" id="IPR008187">
    <property type="entry name" value="Vpu"/>
</dbReference>
<dbReference type="InterPro" id="IPR009032">
    <property type="entry name" value="Vpu_cyt_dom_sf"/>
</dbReference>
<dbReference type="Pfam" id="PF00558">
    <property type="entry name" value="Vpu"/>
    <property type="match status" value="1"/>
</dbReference>
<dbReference type="SUPFAM" id="SSF57647">
    <property type="entry name" value="HIV-1 VPU cytoplasmic domain"/>
    <property type="match status" value="1"/>
</dbReference>
<sequence>MYILGLGIGALVVTFIIAVIVWTIVYIEYKKLVRQKKIDRLIERIGERAEDSGNESDGDTEELSKLMEMGHLNLGYVADL</sequence>
<feature type="chain" id="PRO_0000244322" description="Protein Vpu">
    <location>
        <begin position="1"/>
        <end position="80"/>
    </location>
</feature>
<feature type="topological domain" description="Extracellular" evidence="1">
    <location>
        <begin position="1"/>
        <end position="6"/>
    </location>
</feature>
<feature type="transmembrane region" description="Helical" evidence="1">
    <location>
        <begin position="7"/>
        <end position="27"/>
    </location>
</feature>
<feature type="topological domain" description="Cytoplasmic" evidence="1">
    <location>
        <begin position="28"/>
        <end position="80"/>
    </location>
</feature>
<feature type="modified residue" description="Phosphoserine; by host CK2" evidence="1">
    <location>
        <position position="52"/>
    </location>
</feature>
<feature type="modified residue" description="Phosphoserine; by host CK2" evidence="1">
    <location>
        <position position="56"/>
    </location>
</feature>
<name>VPU_HV190</name>
<evidence type="ECO:0000255" key="1">
    <source>
        <dbReference type="HAMAP-Rule" id="MF_04082"/>
    </source>
</evidence>
<accession>O70901</accession>
<organism>
    <name type="scientific">Human immunodeficiency virus type 1 group M subtype H (isolate 90CF056)</name>
    <name type="common">HIV-1</name>
    <dbReference type="NCBI Taxonomy" id="388826"/>
    <lineage>
        <taxon>Viruses</taxon>
        <taxon>Riboviria</taxon>
        <taxon>Pararnavirae</taxon>
        <taxon>Artverviricota</taxon>
        <taxon>Revtraviricetes</taxon>
        <taxon>Ortervirales</taxon>
        <taxon>Retroviridae</taxon>
        <taxon>Orthoretrovirinae</taxon>
        <taxon>Lentivirus</taxon>
        <taxon>Human immunodeficiency virus type 1</taxon>
    </lineage>
</organism>
<comment type="function">
    <text evidence="1">Enhances virion budding by targeting host CD4 and Tetherin/BST2 to proteasome degradation. Degradation of CD4 prevents any unwanted premature interactions between viral Env and its host receptor CD4 in the endoplasmic reticulum. Degradation of antiretroviral protein Tetherin/BST2 is important for virion budding, as BST2 tethers new viral particles to the host cell membrane. Mechanistically, Vpu bridges either CD4 or BST2 to BTRC, a substrate recognition subunit of the Skp1/Cullin/F-box protein E3 ubiquitin ligase, induces their ubiquitination and subsequent proteasomal degradation. The alteration of the E3 ligase specificity by Vpu seems to promote the degradation of host IKBKB, leading to NF-kappa-B down-regulation and subsequent apoptosis. Acts as a viroporin that forms an oligomeric ion channel in membranes. Modulates the host DNA repair mechanisms to promote degradation of nuclear viral cDNA in cells that are already productively infected in order to suppress immune sensing and proviral hyper-integration (superinfection). Manipulates PML-NBs and modulates SUMOylation of host BLM protein thereby enhancing its DNA-end processing activity toward viral unintegrated linear DNA. Also inhibits RAD52-mediated homologous repair of viral cDNA, preventing the generation of dead-end circular forms of single copies of the long terminal repeat and permitting sustained nucleolytic attack.</text>
</comment>
<comment type="activity regulation">
    <text evidence="1">Ion channel activity is inhibited by hexamethylene amiloride in vitro.</text>
</comment>
<comment type="subunit">
    <text evidence="1">Homopentamer. Interacts with host CD4 and BRTC; these interactions induce proteasomal degradation of CD4. Interacts with host BST2; this interaction leads to the degradation of host BST2. Interacts with host FBXW11. Interacts with host AP1M1; this interaction plays a role in the mistrafficking and subsequent degradation of host BST2. Interacts with host RANBP2; this interaction allows Vpu to down-regulate host BLM sumoylation.</text>
</comment>
<comment type="subcellular location">
    <subcellularLocation>
        <location evidence="1">Host membrane</location>
        <topology evidence="1">Single-pass type I membrane protein</topology>
    </subcellularLocation>
</comment>
<comment type="domain">
    <text evidence="1">The N-terminus and transmembrane domains are required for self-oligomerization and proper virion budding, whereas the cytoplasmic domain is required for CD4 degradation. The cytoplasmic domain is composed of 2 amphipathic alpha helix that form a U-shape.</text>
</comment>
<comment type="PTM">
    <text evidence="1">Phosphorylated by host CK2. This phosphorylation is necessary for interaction with human BTRC and degradation of CD4.</text>
</comment>
<comment type="miscellaneous">
    <text evidence="1">HIV-1 lineages are divided in three main groups, M (for Major), O (for Outlier), and N (for New, or Non-M, Non-O). The vast majority of strains found worldwide belong to the group M. Group O seems to be endemic to and largely confined to Cameroon and neighboring countries in West Central Africa, where these viruses represent a small minority of HIV-1 strains. The group N is represented by a limited number of isolates from Cameroonian persons. The group M is further subdivided in 9 clades or subtypes (A to D, F to H, J and K).</text>
</comment>
<comment type="similarity">
    <text evidence="1">Belongs to the HIV-1 VPU protein family.</text>
</comment>
<reference key="1">
    <citation type="journal article" date="1998" name="J. Virol.">
        <title>A comprehensive panel of near-full-length clones and reference sequences for non-subtype B isolates of human immunodeficiency virus type 1.</title>
        <authorList>
            <person name="Gao F."/>
            <person name="Robertson D.L."/>
            <person name="Carruthers C.D."/>
            <person name="Morrison S.G."/>
            <person name="Jian B."/>
            <person name="Chen Y."/>
            <person name="Barre-Sinoussi F."/>
            <person name="Girard M."/>
            <person name="Srinivasan A."/>
            <person name="Abimiku A.G."/>
            <person name="Shaw G.M."/>
            <person name="Sharp P.M."/>
            <person name="Hahn B.H."/>
        </authorList>
    </citation>
    <scope>NUCLEOTIDE SEQUENCE [GENOMIC DNA]</scope>
</reference>
<protein>
    <recommendedName>
        <fullName evidence="1">Protein Vpu</fullName>
    </recommendedName>
    <alternativeName>
        <fullName evidence="1">U ORF protein</fullName>
    </alternativeName>
    <alternativeName>
        <fullName evidence="1">Viral protein U</fullName>
    </alternativeName>
</protein>
<organismHost>
    <name type="scientific">Homo sapiens</name>
    <name type="common">Human</name>
    <dbReference type="NCBI Taxonomy" id="9606"/>
</organismHost>
<gene>
    <name evidence="1" type="primary">vpu</name>
</gene>